<gene>
    <name evidence="1" type="primary">rimO</name>
    <name type="ordered locus">PCC7424_0470</name>
</gene>
<accession>B7KDB6</accession>
<feature type="chain" id="PRO_0000374795" description="Ribosomal protein uS12 methylthiotransferase RimO">
    <location>
        <begin position="1"/>
        <end position="438"/>
    </location>
</feature>
<feature type="domain" description="MTTase N-terminal" evidence="1">
    <location>
        <begin position="5"/>
        <end position="116"/>
    </location>
</feature>
<feature type="domain" description="Radical SAM core" evidence="2">
    <location>
        <begin position="140"/>
        <end position="369"/>
    </location>
</feature>
<feature type="domain" description="TRAM" evidence="1">
    <location>
        <begin position="372"/>
        <end position="438"/>
    </location>
</feature>
<feature type="binding site" evidence="1">
    <location>
        <position position="14"/>
    </location>
    <ligand>
        <name>[4Fe-4S] cluster</name>
        <dbReference type="ChEBI" id="CHEBI:49883"/>
        <label>1</label>
    </ligand>
</feature>
<feature type="binding site" evidence="1">
    <location>
        <position position="50"/>
    </location>
    <ligand>
        <name>[4Fe-4S] cluster</name>
        <dbReference type="ChEBI" id="CHEBI:49883"/>
        <label>1</label>
    </ligand>
</feature>
<feature type="binding site" evidence="1">
    <location>
        <position position="79"/>
    </location>
    <ligand>
        <name>[4Fe-4S] cluster</name>
        <dbReference type="ChEBI" id="CHEBI:49883"/>
        <label>1</label>
    </ligand>
</feature>
<feature type="binding site" evidence="1">
    <location>
        <position position="154"/>
    </location>
    <ligand>
        <name>[4Fe-4S] cluster</name>
        <dbReference type="ChEBI" id="CHEBI:49883"/>
        <label>2</label>
        <note>4Fe-4S-S-AdoMet</note>
    </ligand>
</feature>
<feature type="binding site" evidence="1">
    <location>
        <position position="158"/>
    </location>
    <ligand>
        <name>[4Fe-4S] cluster</name>
        <dbReference type="ChEBI" id="CHEBI:49883"/>
        <label>2</label>
        <note>4Fe-4S-S-AdoMet</note>
    </ligand>
</feature>
<feature type="binding site" evidence="1">
    <location>
        <position position="161"/>
    </location>
    <ligand>
        <name>[4Fe-4S] cluster</name>
        <dbReference type="ChEBI" id="CHEBI:49883"/>
        <label>2</label>
        <note>4Fe-4S-S-AdoMet</note>
    </ligand>
</feature>
<organism>
    <name type="scientific">Gloeothece citriformis (strain PCC 7424)</name>
    <name type="common">Cyanothece sp. (strain PCC 7424)</name>
    <dbReference type="NCBI Taxonomy" id="65393"/>
    <lineage>
        <taxon>Bacteria</taxon>
        <taxon>Bacillati</taxon>
        <taxon>Cyanobacteriota</taxon>
        <taxon>Cyanophyceae</taxon>
        <taxon>Oscillatoriophycideae</taxon>
        <taxon>Chroococcales</taxon>
        <taxon>Aphanothecaceae</taxon>
        <taxon>Gloeothece</taxon>
        <taxon>Gloeothece citriformis</taxon>
    </lineage>
</organism>
<proteinExistence type="inferred from homology"/>
<comment type="function">
    <text evidence="1">Catalyzes the methylthiolation of an aspartic acid residue of ribosomal protein uS12.</text>
</comment>
<comment type="catalytic activity">
    <reaction evidence="1">
        <text>L-aspartate(89)-[ribosomal protein uS12]-hydrogen + (sulfur carrier)-SH + AH2 + 2 S-adenosyl-L-methionine = 3-methylsulfanyl-L-aspartate(89)-[ribosomal protein uS12]-hydrogen + (sulfur carrier)-H + 5'-deoxyadenosine + L-methionine + A + S-adenosyl-L-homocysteine + 2 H(+)</text>
        <dbReference type="Rhea" id="RHEA:37087"/>
        <dbReference type="Rhea" id="RHEA-COMP:10460"/>
        <dbReference type="Rhea" id="RHEA-COMP:10461"/>
        <dbReference type="Rhea" id="RHEA-COMP:14737"/>
        <dbReference type="Rhea" id="RHEA-COMP:14739"/>
        <dbReference type="ChEBI" id="CHEBI:13193"/>
        <dbReference type="ChEBI" id="CHEBI:15378"/>
        <dbReference type="ChEBI" id="CHEBI:17319"/>
        <dbReference type="ChEBI" id="CHEBI:17499"/>
        <dbReference type="ChEBI" id="CHEBI:29917"/>
        <dbReference type="ChEBI" id="CHEBI:29961"/>
        <dbReference type="ChEBI" id="CHEBI:57844"/>
        <dbReference type="ChEBI" id="CHEBI:57856"/>
        <dbReference type="ChEBI" id="CHEBI:59789"/>
        <dbReference type="ChEBI" id="CHEBI:64428"/>
        <dbReference type="ChEBI" id="CHEBI:73599"/>
        <dbReference type="EC" id="2.8.4.4"/>
    </reaction>
</comment>
<comment type="cofactor">
    <cofactor evidence="1">
        <name>[4Fe-4S] cluster</name>
        <dbReference type="ChEBI" id="CHEBI:49883"/>
    </cofactor>
    <text evidence="1">Binds 2 [4Fe-4S] clusters. One cluster is coordinated with 3 cysteines and an exchangeable S-adenosyl-L-methionine.</text>
</comment>
<comment type="subcellular location">
    <subcellularLocation>
        <location evidence="1">Cytoplasm</location>
    </subcellularLocation>
</comment>
<comment type="similarity">
    <text evidence="1">Belongs to the methylthiotransferase family. RimO subfamily.</text>
</comment>
<keyword id="KW-0004">4Fe-4S</keyword>
<keyword id="KW-0963">Cytoplasm</keyword>
<keyword id="KW-0408">Iron</keyword>
<keyword id="KW-0411">Iron-sulfur</keyword>
<keyword id="KW-0479">Metal-binding</keyword>
<keyword id="KW-1185">Reference proteome</keyword>
<keyword id="KW-0949">S-adenosyl-L-methionine</keyword>
<keyword id="KW-0808">Transferase</keyword>
<evidence type="ECO:0000255" key="1">
    <source>
        <dbReference type="HAMAP-Rule" id="MF_01865"/>
    </source>
</evidence>
<evidence type="ECO:0000255" key="2">
    <source>
        <dbReference type="PROSITE-ProRule" id="PRU01266"/>
    </source>
</evidence>
<dbReference type="EC" id="2.8.4.4" evidence="1"/>
<dbReference type="EMBL" id="CP001291">
    <property type="protein sequence ID" value="ACK68936.1"/>
    <property type="molecule type" value="Genomic_DNA"/>
</dbReference>
<dbReference type="RefSeq" id="WP_012597883.1">
    <property type="nucleotide sequence ID" value="NC_011729.1"/>
</dbReference>
<dbReference type="SMR" id="B7KDB6"/>
<dbReference type="STRING" id="65393.PCC7424_0470"/>
<dbReference type="KEGG" id="cyc:PCC7424_0470"/>
<dbReference type="eggNOG" id="COG0621">
    <property type="taxonomic scope" value="Bacteria"/>
</dbReference>
<dbReference type="HOGENOM" id="CLU_018697_0_1_3"/>
<dbReference type="OrthoDB" id="9805215at2"/>
<dbReference type="Proteomes" id="UP000002384">
    <property type="component" value="Chromosome"/>
</dbReference>
<dbReference type="GO" id="GO:0005829">
    <property type="term" value="C:cytosol"/>
    <property type="evidence" value="ECO:0007669"/>
    <property type="project" value="TreeGrafter"/>
</dbReference>
<dbReference type="GO" id="GO:0051539">
    <property type="term" value="F:4 iron, 4 sulfur cluster binding"/>
    <property type="evidence" value="ECO:0007669"/>
    <property type="project" value="UniProtKB-UniRule"/>
</dbReference>
<dbReference type="GO" id="GO:0035599">
    <property type="term" value="F:aspartic acid methylthiotransferase activity"/>
    <property type="evidence" value="ECO:0007669"/>
    <property type="project" value="TreeGrafter"/>
</dbReference>
<dbReference type="GO" id="GO:0046872">
    <property type="term" value="F:metal ion binding"/>
    <property type="evidence" value="ECO:0007669"/>
    <property type="project" value="UniProtKB-KW"/>
</dbReference>
<dbReference type="GO" id="GO:0103039">
    <property type="term" value="F:protein methylthiotransferase activity"/>
    <property type="evidence" value="ECO:0007669"/>
    <property type="project" value="UniProtKB-EC"/>
</dbReference>
<dbReference type="GO" id="GO:0006400">
    <property type="term" value="P:tRNA modification"/>
    <property type="evidence" value="ECO:0007669"/>
    <property type="project" value="InterPro"/>
</dbReference>
<dbReference type="CDD" id="cd01335">
    <property type="entry name" value="Radical_SAM"/>
    <property type="match status" value="1"/>
</dbReference>
<dbReference type="FunFam" id="3.40.50.12160:FF:000002">
    <property type="entry name" value="Ribosomal protein S12 methylthiotransferase RimO"/>
    <property type="match status" value="1"/>
</dbReference>
<dbReference type="FunFam" id="3.80.30.20:FF:000001">
    <property type="entry name" value="tRNA-2-methylthio-N(6)-dimethylallyladenosine synthase 2"/>
    <property type="match status" value="1"/>
</dbReference>
<dbReference type="Gene3D" id="3.40.50.12160">
    <property type="entry name" value="Methylthiotransferase, N-terminal domain"/>
    <property type="match status" value="1"/>
</dbReference>
<dbReference type="Gene3D" id="2.40.50.140">
    <property type="entry name" value="Nucleic acid-binding proteins"/>
    <property type="match status" value="1"/>
</dbReference>
<dbReference type="Gene3D" id="3.80.30.20">
    <property type="entry name" value="tm_1862 like domain"/>
    <property type="match status" value="1"/>
</dbReference>
<dbReference type="HAMAP" id="MF_01865">
    <property type="entry name" value="MTTase_RimO"/>
    <property type="match status" value="1"/>
</dbReference>
<dbReference type="InterPro" id="IPR006638">
    <property type="entry name" value="Elp3/MiaA/NifB-like_rSAM"/>
</dbReference>
<dbReference type="InterPro" id="IPR005839">
    <property type="entry name" value="Methylthiotransferase"/>
</dbReference>
<dbReference type="InterPro" id="IPR020612">
    <property type="entry name" value="Methylthiotransferase_CS"/>
</dbReference>
<dbReference type="InterPro" id="IPR013848">
    <property type="entry name" value="Methylthiotransferase_N"/>
</dbReference>
<dbReference type="InterPro" id="IPR038135">
    <property type="entry name" value="Methylthiotransferase_N_sf"/>
</dbReference>
<dbReference type="InterPro" id="IPR012340">
    <property type="entry name" value="NA-bd_OB-fold"/>
</dbReference>
<dbReference type="InterPro" id="IPR005840">
    <property type="entry name" value="Ribosomal_uS12_MeSTrfase_RimO"/>
</dbReference>
<dbReference type="InterPro" id="IPR007197">
    <property type="entry name" value="rSAM"/>
</dbReference>
<dbReference type="InterPro" id="IPR023404">
    <property type="entry name" value="rSAM_horseshoe"/>
</dbReference>
<dbReference type="InterPro" id="IPR002792">
    <property type="entry name" value="TRAM_dom"/>
</dbReference>
<dbReference type="NCBIfam" id="TIGR01125">
    <property type="entry name" value="30S ribosomal protein S12 methylthiotransferase RimO"/>
    <property type="match status" value="1"/>
</dbReference>
<dbReference type="NCBIfam" id="TIGR00089">
    <property type="entry name" value="MiaB/RimO family radical SAM methylthiotransferase"/>
    <property type="match status" value="1"/>
</dbReference>
<dbReference type="PANTHER" id="PTHR43837">
    <property type="entry name" value="RIBOSOMAL PROTEIN S12 METHYLTHIOTRANSFERASE RIMO"/>
    <property type="match status" value="1"/>
</dbReference>
<dbReference type="PANTHER" id="PTHR43837:SF1">
    <property type="entry name" value="RIBOSOMAL PROTEIN US12 METHYLTHIOTRANSFERASE RIMO"/>
    <property type="match status" value="1"/>
</dbReference>
<dbReference type="Pfam" id="PF04055">
    <property type="entry name" value="Radical_SAM"/>
    <property type="match status" value="1"/>
</dbReference>
<dbReference type="Pfam" id="PF18693">
    <property type="entry name" value="TRAM_2"/>
    <property type="match status" value="1"/>
</dbReference>
<dbReference type="Pfam" id="PF00919">
    <property type="entry name" value="UPF0004"/>
    <property type="match status" value="1"/>
</dbReference>
<dbReference type="SFLD" id="SFLDG01082">
    <property type="entry name" value="B12-binding_domain_containing"/>
    <property type="match status" value="1"/>
</dbReference>
<dbReference type="SFLD" id="SFLDG01061">
    <property type="entry name" value="methylthiotransferase"/>
    <property type="match status" value="1"/>
</dbReference>
<dbReference type="SFLD" id="SFLDF00274">
    <property type="entry name" value="ribosomal_protein_S12_methylth"/>
    <property type="match status" value="1"/>
</dbReference>
<dbReference type="SMART" id="SM00729">
    <property type="entry name" value="Elp3"/>
    <property type="match status" value="1"/>
</dbReference>
<dbReference type="SUPFAM" id="SSF102114">
    <property type="entry name" value="Radical SAM enzymes"/>
    <property type="match status" value="1"/>
</dbReference>
<dbReference type="PROSITE" id="PS51449">
    <property type="entry name" value="MTTASE_N"/>
    <property type="match status" value="1"/>
</dbReference>
<dbReference type="PROSITE" id="PS01278">
    <property type="entry name" value="MTTASE_RADICAL"/>
    <property type="match status" value="1"/>
</dbReference>
<dbReference type="PROSITE" id="PS51918">
    <property type="entry name" value="RADICAL_SAM"/>
    <property type="match status" value="1"/>
</dbReference>
<dbReference type="PROSITE" id="PS50926">
    <property type="entry name" value="TRAM"/>
    <property type="match status" value="1"/>
</dbReference>
<name>RIMO_GLOC7</name>
<protein>
    <recommendedName>
        <fullName evidence="1">Ribosomal protein uS12 methylthiotransferase RimO</fullName>
        <shortName evidence="1">uS12 MTTase</shortName>
        <shortName evidence="1">uS12 methylthiotransferase</shortName>
        <ecNumber evidence="1">2.8.4.4</ecNumber>
    </recommendedName>
    <alternativeName>
        <fullName evidence="1">Ribosomal protein uS12 (aspartate-C(3))-methylthiotransferase</fullName>
    </alternativeName>
    <alternativeName>
        <fullName evidence="1">Ribosome maturation factor RimO</fullName>
    </alternativeName>
</protein>
<sequence>MGNKPTIAISHLGCEKNRIDSEHMLGLLAQAGYPVDANEELADYVIVNTCSFIQSAREESVRTLVELAEANKKVIISGCMAQHFQDELLSELPEAVAIVGTGDYQKIVQVIQRVENGQRVKEISSEPTYIADETVPRYRTTSEGVAYLRVAEGCDYRCSFCIIPHLRGNQRSRTIESIVREAQQLADQGVQELILISQITTNYGLDLYGEPKLAQLLQALGEVDIPWIRIHYAYPTGLTPKVIEAIRETPNVLPYLDLPLQHSHPDILKRMNRPWQGRVNDSIIERIKDAIPKAVLRTTFIVGFPGETEEHYAHLVEFVKRHEFDHVGVFTFSPEEETPAYHMANQIPQEIMEQRRDTIMQIQQPISLQKNCACIGDIVDVLIEQENPDTGQFIGRSARFAPEVDGLVYVEGEASLGTIIPVKIKDADIYDLYGEVIN</sequence>
<reference key="1">
    <citation type="journal article" date="2011" name="MBio">
        <title>Novel metabolic attributes of the genus Cyanothece, comprising a group of unicellular nitrogen-fixing Cyanobacteria.</title>
        <authorList>
            <person name="Bandyopadhyay A."/>
            <person name="Elvitigala T."/>
            <person name="Welsh E."/>
            <person name="Stockel J."/>
            <person name="Liberton M."/>
            <person name="Min H."/>
            <person name="Sherman L.A."/>
            <person name="Pakrasi H.B."/>
        </authorList>
    </citation>
    <scope>NUCLEOTIDE SEQUENCE [LARGE SCALE GENOMIC DNA]</scope>
    <source>
        <strain>PCC 7424</strain>
    </source>
</reference>